<dbReference type="EMBL" id="CP000687">
    <property type="protein sequence ID" value="ABY69432.1"/>
    <property type="molecule type" value="Genomic_DNA"/>
</dbReference>
<dbReference type="SMR" id="B0BPE7"/>
<dbReference type="KEGG" id="apj:APJL_0874"/>
<dbReference type="HOGENOM" id="CLU_185263_1_1_6"/>
<dbReference type="Proteomes" id="UP000008547">
    <property type="component" value="Chromosome"/>
</dbReference>
<dbReference type="HAMAP" id="MF_00507">
    <property type="entry name" value="UPF0181"/>
    <property type="match status" value="1"/>
</dbReference>
<dbReference type="InterPro" id="IPR005371">
    <property type="entry name" value="UPF0181"/>
</dbReference>
<dbReference type="NCBIfam" id="NF003476">
    <property type="entry name" value="PRK05114.1"/>
    <property type="match status" value="1"/>
</dbReference>
<dbReference type="Pfam" id="PF03701">
    <property type="entry name" value="UPF0181"/>
    <property type="match status" value="1"/>
</dbReference>
<accession>B0BPE7</accession>
<sequence>MDNALLSLTHEQQQAAVEQIQELMAQGVSSGEAIQIIANRLREAHQNNTSENNS</sequence>
<comment type="similarity">
    <text evidence="1">Belongs to the UPF0181 family.</text>
</comment>
<reference key="1">
    <citation type="journal article" date="2008" name="PLoS ONE">
        <title>Genome biology of Actinobacillus pleuropneumoniae JL03, an isolate of serotype 3 prevalent in China.</title>
        <authorList>
            <person name="Xu Z."/>
            <person name="Zhou Y."/>
            <person name="Li L."/>
            <person name="Zhou R."/>
            <person name="Xiao S."/>
            <person name="Wan Y."/>
            <person name="Zhang S."/>
            <person name="Wang K."/>
            <person name="Li W."/>
            <person name="Li L."/>
            <person name="Jin H."/>
            <person name="Kang M."/>
            <person name="Dalai B."/>
            <person name="Li T."/>
            <person name="Liu L."/>
            <person name="Cheng Y."/>
            <person name="Zhang L."/>
            <person name="Xu T."/>
            <person name="Zheng H."/>
            <person name="Pu S."/>
            <person name="Wang B."/>
            <person name="Gu W."/>
            <person name="Zhang X.L."/>
            <person name="Zhu G.-F."/>
            <person name="Wang S."/>
            <person name="Zhao G.-P."/>
            <person name="Chen H."/>
        </authorList>
    </citation>
    <scope>NUCLEOTIDE SEQUENCE [LARGE SCALE GENOMIC DNA]</scope>
    <source>
        <strain>JL03</strain>
    </source>
</reference>
<organism>
    <name type="scientific">Actinobacillus pleuropneumoniae serotype 3 (strain JL03)</name>
    <dbReference type="NCBI Taxonomy" id="434271"/>
    <lineage>
        <taxon>Bacteria</taxon>
        <taxon>Pseudomonadati</taxon>
        <taxon>Pseudomonadota</taxon>
        <taxon>Gammaproteobacteria</taxon>
        <taxon>Pasteurellales</taxon>
        <taxon>Pasteurellaceae</taxon>
        <taxon>Actinobacillus</taxon>
    </lineage>
</organism>
<name>Y874_ACTPJ</name>
<gene>
    <name type="ordered locus">APJL_0874</name>
</gene>
<evidence type="ECO:0000255" key="1">
    <source>
        <dbReference type="HAMAP-Rule" id="MF_00507"/>
    </source>
</evidence>
<feature type="chain" id="PRO_1000127040" description="UPF0181 protein APJL_0874">
    <location>
        <begin position="1"/>
        <end position="54"/>
    </location>
</feature>
<protein>
    <recommendedName>
        <fullName evidence="1">UPF0181 protein APJL_0874</fullName>
    </recommendedName>
</protein>
<proteinExistence type="inferred from homology"/>